<dbReference type="EC" id="7.-.-.-"/>
<dbReference type="EMBL" id="AE016796">
    <property type="protein sequence ID" value="AAO08397.2"/>
    <property type="molecule type" value="Genomic_DNA"/>
</dbReference>
<dbReference type="RefSeq" id="WP_011082382.1">
    <property type="nucleotide sequence ID" value="NC_004460.2"/>
</dbReference>
<dbReference type="SMR" id="Q8D3Z9"/>
<dbReference type="KEGG" id="vvu:VV2_1533"/>
<dbReference type="HOGENOM" id="CLU_000604_86_7_6"/>
<dbReference type="Proteomes" id="UP000002275">
    <property type="component" value="Chromosome 2"/>
</dbReference>
<dbReference type="GO" id="GO:0043190">
    <property type="term" value="C:ATP-binding cassette (ABC) transporter complex"/>
    <property type="evidence" value="ECO:0007669"/>
    <property type="project" value="TreeGrafter"/>
</dbReference>
<dbReference type="GO" id="GO:0005524">
    <property type="term" value="F:ATP binding"/>
    <property type="evidence" value="ECO:0007669"/>
    <property type="project" value="UniProtKB-KW"/>
</dbReference>
<dbReference type="GO" id="GO:0016887">
    <property type="term" value="F:ATP hydrolysis activity"/>
    <property type="evidence" value="ECO:0007669"/>
    <property type="project" value="InterPro"/>
</dbReference>
<dbReference type="GO" id="GO:0042626">
    <property type="term" value="F:ATPase-coupled transmembrane transporter activity"/>
    <property type="evidence" value="ECO:0007669"/>
    <property type="project" value="TreeGrafter"/>
</dbReference>
<dbReference type="CDD" id="cd03225">
    <property type="entry name" value="ABC_cobalt_CbiO_domain1"/>
    <property type="match status" value="2"/>
</dbReference>
<dbReference type="FunFam" id="3.40.50.300:FF:001422">
    <property type="entry name" value="Cobalt ABC transporter ATP-binding protein"/>
    <property type="match status" value="1"/>
</dbReference>
<dbReference type="FunFam" id="3.40.50.300:FF:000224">
    <property type="entry name" value="Energy-coupling factor transporter ATP-binding protein EcfA"/>
    <property type="match status" value="1"/>
</dbReference>
<dbReference type="Gene3D" id="3.40.50.300">
    <property type="entry name" value="P-loop containing nucleotide triphosphate hydrolases"/>
    <property type="match status" value="2"/>
</dbReference>
<dbReference type="InterPro" id="IPR003593">
    <property type="entry name" value="AAA+_ATPase"/>
</dbReference>
<dbReference type="InterPro" id="IPR022216">
    <property type="entry name" value="ABC_Co_transporter"/>
</dbReference>
<dbReference type="InterPro" id="IPR003439">
    <property type="entry name" value="ABC_transporter-like_ATP-bd"/>
</dbReference>
<dbReference type="InterPro" id="IPR017871">
    <property type="entry name" value="ABC_transporter-like_CS"/>
</dbReference>
<dbReference type="InterPro" id="IPR015856">
    <property type="entry name" value="ABC_transpr_CbiO/EcfA_su"/>
</dbReference>
<dbReference type="InterPro" id="IPR050095">
    <property type="entry name" value="ECF_ABC_transporter_ATP-bd"/>
</dbReference>
<dbReference type="InterPro" id="IPR027417">
    <property type="entry name" value="P-loop_NTPase"/>
</dbReference>
<dbReference type="NCBIfam" id="NF010167">
    <property type="entry name" value="PRK13648.1"/>
    <property type="match status" value="2"/>
</dbReference>
<dbReference type="PANTHER" id="PTHR43553:SF26">
    <property type="entry name" value="ABC TRANSPORTER ATP-BINDING PROTEIN BC_2655-RELATED"/>
    <property type="match status" value="1"/>
</dbReference>
<dbReference type="PANTHER" id="PTHR43553">
    <property type="entry name" value="HEAVY METAL TRANSPORTER"/>
    <property type="match status" value="1"/>
</dbReference>
<dbReference type="Pfam" id="PF00005">
    <property type="entry name" value="ABC_tran"/>
    <property type="match status" value="2"/>
</dbReference>
<dbReference type="Pfam" id="PF12558">
    <property type="entry name" value="DUF3744"/>
    <property type="match status" value="1"/>
</dbReference>
<dbReference type="SMART" id="SM00382">
    <property type="entry name" value="AAA"/>
    <property type="match status" value="2"/>
</dbReference>
<dbReference type="SUPFAM" id="SSF52540">
    <property type="entry name" value="P-loop containing nucleoside triphosphate hydrolases"/>
    <property type="match status" value="2"/>
</dbReference>
<dbReference type="PROSITE" id="PS00211">
    <property type="entry name" value="ABC_TRANSPORTER_1"/>
    <property type="match status" value="2"/>
</dbReference>
<dbReference type="PROSITE" id="PS50893">
    <property type="entry name" value="ABC_TRANSPORTER_2"/>
    <property type="match status" value="2"/>
</dbReference>
<name>Y5533_VIBVU</name>
<accession>Q8D3Z9</accession>
<reference key="1">
    <citation type="submission" date="2002-12" db="EMBL/GenBank/DDBJ databases">
        <title>Complete genome sequence of Vibrio vulnificus CMCP6.</title>
        <authorList>
            <person name="Rhee J.H."/>
            <person name="Kim S.Y."/>
            <person name="Chung S.S."/>
            <person name="Kim J.J."/>
            <person name="Moon Y.H."/>
            <person name="Jeong H."/>
            <person name="Choy H.E."/>
        </authorList>
    </citation>
    <scope>NUCLEOTIDE SEQUENCE [LARGE SCALE GENOMIC DNA]</scope>
    <source>
        <strain>CMCP6</strain>
    </source>
</reference>
<evidence type="ECO:0000250" key="1"/>
<evidence type="ECO:0000255" key="2">
    <source>
        <dbReference type="PROSITE-ProRule" id="PRU00434"/>
    </source>
</evidence>
<evidence type="ECO:0000305" key="3"/>
<proteinExistence type="inferred from homology"/>
<gene>
    <name type="ordered locus">VV2_1533</name>
</gene>
<organism>
    <name type="scientific">Vibrio vulnificus (strain CMCP6)</name>
    <dbReference type="NCBI Taxonomy" id="216895"/>
    <lineage>
        <taxon>Bacteria</taxon>
        <taxon>Pseudomonadati</taxon>
        <taxon>Pseudomonadota</taxon>
        <taxon>Gammaproteobacteria</taxon>
        <taxon>Vibrionales</taxon>
        <taxon>Vibrionaceae</taxon>
        <taxon>Vibrio</taxon>
    </lineage>
</organism>
<protein>
    <recommendedName>
        <fullName>Putative ABC transporter ATP-binding protein VV2_1533</fullName>
        <ecNumber>7.-.-.-</ecNumber>
    </recommendedName>
</protein>
<comment type="function">
    <text evidence="1">Probably part of an ABC transporter complex. Responsible for energy coupling to the transport system (By similarity).</text>
</comment>
<comment type="subcellular location">
    <subcellularLocation>
        <location evidence="1">Cell inner membrane</location>
        <topology evidence="1">Peripheral membrane protein</topology>
    </subcellularLocation>
</comment>
<comment type="similarity">
    <text evidence="3">Belongs to the ABC transporter superfamily.</text>
</comment>
<keyword id="KW-0067">ATP-binding</keyword>
<keyword id="KW-0997">Cell inner membrane</keyword>
<keyword id="KW-1003">Cell membrane</keyword>
<keyword id="KW-0472">Membrane</keyword>
<keyword id="KW-0547">Nucleotide-binding</keyword>
<keyword id="KW-0677">Repeat</keyword>
<keyword id="KW-1278">Translocase</keyword>
<keyword id="KW-0813">Transport</keyword>
<feature type="chain" id="PRO_0000092127" description="Putative ABC transporter ATP-binding protein VV2_1533">
    <location>
        <begin position="1"/>
        <end position="574"/>
    </location>
</feature>
<feature type="domain" description="ABC transporter 1" evidence="2">
    <location>
        <begin position="3"/>
        <end position="244"/>
    </location>
</feature>
<feature type="domain" description="ABC transporter 2" evidence="2">
    <location>
        <begin position="299"/>
        <end position="533"/>
    </location>
</feature>
<feature type="binding site" evidence="2">
    <location>
        <begin position="37"/>
        <end position="44"/>
    </location>
    <ligand>
        <name>ATP</name>
        <dbReference type="ChEBI" id="CHEBI:30616"/>
        <label>1</label>
    </ligand>
</feature>
<feature type="binding site" evidence="2">
    <location>
        <begin position="332"/>
        <end position="339"/>
    </location>
    <ligand>
        <name>ATP</name>
        <dbReference type="ChEBI" id="CHEBI:30616"/>
        <label>2</label>
    </ligand>
</feature>
<sequence>MTIEFSNFSFRYESLDKPTLRNINLRIEKGEKIVIIGPSGSGKSTLGQCLNGLIPHAIKGEVSGSLTINGQETATFAMHQFTEQVGTVLQDTDSQFVGLSIGEDIAFALENQLTSNIEMYSLVKATAKMVDLEQMLQRSPHDLSGGQKQRVSLAGILVDDVDILLFDEPLAALDPKTGKRTIEIIDELHRKTGKTVVIIEHRLEDVLHRHVDRIILMDDGEIMADTTPDELLASPLLAQYGIREPLYLTALKSAGCHLALDDHPSSLSELPLANYQHAMADWFHQANTTSNHIRSETLLDVRNLTYSYDGEKNALEGVSFNVQRGEFVSILGKNGSGKSTITKLIMGVIEPDDGAIYLNGQDLSELTIFERSQKVGVVMQNPNHMISHHMIFDEVAFGLRNRGWDEQQVNDKVLEVLELCGLSKYRHWPIEALSYGQKKRVTIASILALEPELLILDEPTAGQDYRNYTSMLSFIEKLNRELGITVVIISHDMHLVLEYTTRSIVIADSQLVADAPMTDVFSNPALLDQANLTTTSLYELATRLNMAETNAFMQHFIDVEKASRLEKTVERNVA</sequence>